<feature type="chain" id="PRO_1000204508" description="ATP-dependent protease subunit HslV">
    <location>
        <begin position="1"/>
        <end position="177"/>
    </location>
</feature>
<feature type="active site" evidence="1">
    <location>
        <position position="7"/>
    </location>
</feature>
<feature type="binding site" evidence="1">
    <location>
        <position position="162"/>
    </location>
    <ligand>
        <name>Na(+)</name>
        <dbReference type="ChEBI" id="CHEBI:29101"/>
    </ligand>
</feature>
<feature type="binding site" evidence="1">
    <location>
        <position position="165"/>
    </location>
    <ligand>
        <name>Na(+)</name>
        <dbReference type="ChEBI" id="CHEBI:29101"/>
    </ligand>
</feature>
<feature type="binding site" evidence="1">
    <location>
        <position position="168"/>
    </location>
    <ligand>
        <name>Na(+)</name>
        <dbReference type="ChEBI" id="CHEBI:29101"/>
    </ligand>
</feature>
<comment type="function">
    <text evidence="1">Protease subunit of a proteasome-like degradation complex believed to be a general protein degrading machinery.</text>
</comment>
<comment type="catalytic activity">
    <reaction evidence="1">
        <text>ATP-dependent cleavage of peptide bonds with broad specificity.</text>
        <dbReference type="EC" id="3.4.25.2"/>
    </reaction>
</comment>
<comment type="activity regulation">
    <text evidence="1">Allosterically activated by HslU binding.</text>
</comment>
<comment type="subunit">
    <text evidence="1">A double ring-shaped homohexamer of HslV is capped on each side by a ring-shaped HslU homohexamer. The assembly of the HslU/HslV complex is dependent on binding of ATP.</text>
</comment>
<comment type="subcellular location">
    <subcellularLocation>
        <location evidence="1">Cytoplasm</location>
    </subcellularLocation>
</comment>
<comment type="similarity">
    <text evidence="1">Belongs to the peptidase T1B family. HslV subfamily.</text>
</comment>
<name>HSLV_LEPBA</name>
<keyword id="KW-0021">Allosteric enzyme</keyword>
<keyword id="KW-0963">Cytoplasm</keyword>
<keyword id="KW-0378">Hydrolase</keyword>
<keyword id="KW-0479">Metal-binding</keyword>
<keyword id="KW-0645">Protease</keyword>
<keyword id="KW-0915">Sodium</keyword>
<keyword id="KW-0888">Threonine protease</keyword>
<sequence length="177" mass="19076">METIHATTILSVRKNGKIAVGGDGQVSMGNTVMKHTAKKVRRLYNGKVIAGFAGSAADAFTLFELFEKKLIEHGGSVSRAAVELAREWRMDRMLRRLEALLIVCDANESFLISGTGDVISPDDGVLAIGSGGNFALSAARALVENTDLDPKEIITKAMNITADICIYTNHNLVIEEL</sequence>
<protein>
    <recommendedName>
        <fullName evidence="1">ATP-dependent protease subunit HslV</fullName>
        <ecNumber evidence="1">3.4.25.2</ecNumber>
    </recommendedName>
</protein>
<proteinExistence type="inferred from homology"/>
<accession>B0SCD1</accession>
<dbReference type="EC" id="3.4.25.2" evidence="1"/>
<dbReference type="EMBL" id="CP000777">
    <property type="protein sequence ID" value="ABZ94778.1"/>
    <property type="molecule type" value="Genomic_DNA"/>
</dbReference>
<dbReference type="RefSeq" id="WP_012389310.1">
    <property type="nucleotide sequence ID" value="NC_010842.1"/>
</dbReference>
<dbReference type="SMR" id="B0SCD1"/>
<dbReference type="MEROPS" id="T01.006"/>
<dbReference type="KEGG" id="lbf:LBF_2285"/>
<dbReference type="HOGENOM" id="CLU_093872_1_0_12"/>
<dbReference type="GO" id="GO:0009376">
    <property type="term" value="C:HslUV protease complex"/>
    <property type="evidence" value="ECO:0007669"/>
    <property type="project" value="UniProtKB-UniRule"/>
</dbReference>
<dbReference type="GO" id="GO:0005839">
    <property type="term" value="C:proteasome core complex"/>
    <property type="evidence" value="ECO:0007669"/>
    <property type="project" value="InterPro"/>
</dbReference>
<dbReference type="GO" id="GO:0046872">
    <property type="term" value="F:metal ion binding"/>
    <property type="evidence" value="ECO:0007669"/>
    <property type="project" value="UniProtKB-KW"/>
</dbReference>
<dbReference type="GO" id="GO:0004298">
    <property type="term" value="F:threonine-type endopeptidase activity"/>
    <property type="evidence" value="ECO:0007669"/>
    <property type="project" value="UniProtKB-KW"/>
</dbReference>
<dbReference type="GO" id="GO:0051603">
    <property type="term" value="P:proteolysis involved in protein catabolic process"/>
    <property type="evidence" value="ECO:0007669"/>
    <property type="project" value="InterPro"/>
</dbReference>
<dbReference type="CDD" id="cd01913">
    <property type="entry name" value="protease_HslV"/>
    <property type="match status" value="1"/>
</dbReference>
<dbReference type="FunFam" id="3.60.20.10:FF:000002">
    <property type="entry name" value="ATP-dependent protease subunit HslV"/>
    <property type="match status" value="1"/>
</dbReference>
<dbReference type="Gene3D" id="3.60.20.10">
    <property type="entry name" value="Glutamine Phosphoribosylpyrophosphate, subunit 1, domain 1"/>
    <property type="match status" value="1"/>
</dbReference>
<dbReference type="HAMAP" id="MF_00248">
    <property type="entry name" value="HslV"/>
    <property type="match status" value="1"/>
</dbReference>
<dbReference type="InterPro" id="IPR022281">
    <property type="entry name" value="ATP-dep_Prtase_HsIV_su"/>
</dbReference>
<dbReference type="InterPro" id="IPR029055">
    <property type="entry name" value="Ntn_hydrolases_N"/>
</dbReference>
<dbReference type="InterPro" id="IPR001353">
    <property type="entry name" value="Proteasome_sua/b"/>
</dbReference>
<dbReference type="InterPro" id="IPR023333">
    <property type="entry name" value="Proteasome_suB-type"/>
</dbReference>
<dbReference type="NCBIfam" id="TIGR03692">
    <property type="entry name" value="ATP_dep_HslV"/>
    <property type="match status" value="1"/>
</dbReference>
<dbReference type="NCBIfam" id="NF003964">
    <property type="entry name" value="PRK05456.1"/>
    <property type="match status" value="1"/>
</dbReference>
<dbReference type="PANTHER" id="PTHR32194:SF0">
    <property type="entry name" value="ATP-DEPENDENT PROTEASE SUBUNIT HSLV"/>
    <property type="match status" value="1"/>
</dbReference>
<dbReference type="PANTHER" id="PTHR32194">
    <property type="entry name" value="METALLOPROTEASE TLDD"/>
    <property type="match status" value="1"/>
</dbReference>
<dbReference type="Pfam" id="PF00227">
    <property type="entry name" value="Proteasome"/>
    <property type="match status" value="1"/>
</dbReference>
<dbReference type="PIRSF" id="PIRSF039093">
    <property type="entry name" value="HslV"/>
    <property type="match status" value="1"/>
</dbReference>
<dbReference type="SUPFAM" id="SSF56235">
    <property type="entry name" value="N-terminal nucleophile aminohydrolases (Ntn hydrolases)"/>
    <property type="match status" value="1"/>
</dbReference>
<dbReference type="PROSITE" id="PS51476">
    <property type="entry name" value="PROTEASOME_BETA_2"/>
    <property type="match status" value="1"/>
</dbReference>
<evidence type="ECO:0000255" key="1">
    <source>
        <dbReference type="HAMAP-Rule" id="MF_00248"/>
    </source>
</evidence>
<gene>
    <name evidence="1" type="primary">hslV</name>
    <name type="ordered locus">LBF_2285</name>
</gene>
<organism>
    <name type="scientific">Leptospira biflexa serovar Patoc (strain Patoc 1 / Ames)</name>
    <dbReference type="NCBI Taxonomy" id="355278"/>
    <lineage>
        <taxon>Bacteria</taxon>
        <taxon>Pseudomonadati</taxon>
        <taxon>Spirochaetota</taxon>
        <taxon>Spirochaetia</taxon>
        <taxon>Leptospirales</taxon>
        <taxon>Leptospiraceae</taxon>
        <taxon>Leptospira</taxon>
    </lineage>
</organism>
<reference key="1">
    <citation type="journal article" date="2008" name="PLoS ONE">
        <title>Genome sequence of the saprophyte Leptospira biflexa provides insights into the evolution of Leptospira and the pathogenesis of leptospirosis.</title>
        <authorList>
            <person name="Picardeau M."/>
            <person name="Bulach D.M."/>
            <person name="Bouchier C."/>
            <person name="Zuerner R.L."/>
            <person name="Zidane N."/>
            <person name="Wilson P.J."/>
            <person name="Creno S."/>
            <person name="Kuczek E.S."/>
            <person name="Bommezzadri S."/>
            <person name="Davis J.C."/>
            <person name="McGrath A."/>
            <person name="Johnson M.J."/>
            <person name="Boursaux-Eude C."/>
            <person name="Seemann T."/>
            <person name="Rouy Z."/>
            <person name="Coppel R.L."/>
            <person name="Rood J.I."/>
            <person name="Lajus A."/>
            <person name="Davies J.K."/>
            <person name="Medigue C."/>
            <person name="Adler B."/>
        </authorList>
    </citation>
    <scope>NUCLEOTIDE SEQUENCE [LARGE SCALE GENOMIC DNA]</scope>
    <source>
        <strain>Patoc 1 / Ames</strain>
    </source>
</reference>